<keyword id="KW-0067">ATP-binding</keyword>
<keyword id="KW-0238">DNA-binding</keyword>
<keyword id="KW-0479">Metal-binding</keyword>
<keyword id="KW-0547">Nucleotide-binding</keyword>
<keyword id="KW-0678">Repressor</keyword>
<keyword id="KW-0804">Transcription</keyword>
<keyword id="KW-0805">Transcription regulation</keyword>
<keyword id="KW-0862">Zinc</keyword>
<keyword id="KW-0863">Zinc-finger</keyword>
<gene>
    <name evidence="1" type="primary">nrdR</name>
    <name type="ordered locus">SPA2308</name>
</gene>
<evidence type="ECO:0000255" key="1">
    <source>
        <dbReference type="HAMAP-Rule" id="MF_00440"/>
    </source>
</evidence>
<protein>
    <recommendedName>
        <fullName evidence="1">Transcriptional repressor NrdR</fullName>
    </recommendedName>
</protein>
<dbReference type="EMBL" id="CP000026">
    <property type="protein sequence ID" value="AAV78193.1"/>
    <property type="molecule type" value="Genomic_DNA"/>
</dbReference>
<dbReference type="RefSeq" id="WP_000543533.1">
    <property type="nucleotide sequence ID" value="NC_006511.1"/>
</dbReference>
<dbReference type="SMR" id="Q5PFS6"/>
<dbReference type="GeneID" id="66754886"/>
<dbReference type="KEGG" id="spt:SPA2308"/>
<dbReference type="HOGENOM" id="CLU_108412_0_0_6"/>
<dbReference type="Proteomes" id="UP000008185">
    <property type="component" value="Chromosome"/>
</dbReference>
<dbReference type="GO" id="GO:0005524">
    <property type="term" value="F:ATP binding"/>
    <property type="evidence" value="ECO:0007669"/>
    <property type="project" value="UniProtKB-KW"/>
</dbReference>
<dbReference type="GO" id="GO:0003677">
    <property type="term" value="F:DNA binding"/>
    <property type="evidence" value="ECO:0007669"/>
    <property type="project" value="UniProtKB-KW"/>
</dbReference>
<dbReference type="GO" id="GO:0008270">
    <property type="term" value="F:zinc ion binding"/>
    <property type="evidence" value="ECO:0007669"/>
    <property type="project" value="UniProtKB-UniRule"/>
</dbReference>
<dbReference type="GO" id="GO:0045892">
    <property type="term" value="P:negative regulation of DNA-templated transcription"/>
    <property type="evidence" value="ECO:0007669"/>
    <property type="project" value="UniProtKB-UniRule"/>
</dbReference>
<dbReference type="HAMAP" id="MF_00440">
    <property type="entry name" value="NrdR"/>
    <property type="match status" value="1"/>
</dbReference>
<dbReference type="InterPro" id="IPR005144">
    <property type="entry name" value="ATP-cone_dom"/>
</dbReference>
<dbReference type="InterPro" id="IPR055173">
    <property type="entry name" value="NrdR-like_N"/>
</dbReference>
<dbReference type="InterPro" id="IPR003796">
    <property type="entry name" value="RNR_NrdR-like"/>
</dbReference>
<dbReference type="NCBIfam" id="TIGR00244">
    <property type="entry name" value="transcriptional regulator NrdR"/>
    <property type="match status" value="1"/>
</dbReference>
<dbReference type="PANTHER" id="PTHR30455">
    <property type="entry name" value="TRANSCRIPTIONAL REPRESSOR NRDR"/>
    <property type="match status" value="1"/>
</dbReference>
<dbReference type="PANTHER" id="PTHR30455:SF2">
    <property type="entry name" value="TRANSCRIPTIONAL REPRESSOR NRDR"/>
    <property type="match status" value="1"/>
</dbReference>
<dbReference type="Pfam" id="PF03477">
    <property type="entry name" value="ATP-cone"/>
    <property type="match status" value="1"/>
</dbReference>
<dbReference type="Pfam" id="PF22811">
    <property type="entry name" value="Zn_ribbon_NrdR"/>
    <property type="match status" value="1"/>
</dbReference>
<dbReference type="PROSITE" id="PS51161">
    <property type="entry name" value="ATP_CONE"/>
    <property type="match status" value="1"/>
</dbReference>
<reference key="1">
    <citation type="journal article" date="2004" name="Nat. Genet.">
        <title>Comparison of genome degradation in Paratyphi A and Typhi, human-restricted serovars of Salmonella enterica that cause typhoid.</title>
        <authorList>
            <person name="McClelland M."/>
            <person name="Sanderson K.E."/>
            <person name="Clifton S.W."/>
            <person name="Latreille P."/>
            <person name="Porwollik S."/>
            <person name="Sabo A."/>
            <person name="Meyer R."/>
            <person name="Bieri T."/>
            <person name="Ozersky P."/>
            <person name="McLellan M."/>
            <person name="Harkins C.R."/>
            <person name="Wang C."/>
            <person name="Nguyen C."/>
            <person name="Berghoff A."/>
            <person name="Elliott G."/>
            <person name="Kohlberg S."/>
            <person name="Strong C."/>
            <person name="Du F."/>
            <person name="Carter J."/>
            <person name="Kremizki C."/>
            <person name="Layman D."/>
            <person name="Leonard S."/>
            <person name="Sun H."/>
            <person name="Fulton L."/>
            <person name="Nash W."/>
            <person name="Miner T."/>
            <person name="Minx P."/>
            <person name="Delehaunty K."/>
            <person name="Fronick C."/>
            <person name="Magrini V."/>
            <person name="Nhan M."/>
            <person name="Warren W."/>
            <person name="Florea L."/>
            <person name="Spieth J."/>
            <person name="Wilson R.K."/>
        </authorList>
    </citation>
    <scope>NUCLEOTIDE SEQUENCE [LARGE SCALE GENOMIC DNA]</scope>
    <source>
        <strain>ATCC 9150 / SARB42</strain>
    </source>
</reference>
<feature type="chain" id="PRO_0000230890" description="Transcriptional repressor NrdR">
    <location>
        <begin position="1"/>
        <end position="149"/>
    </location>
</feature>
<feature type="domain" description="ATP-cone" evidence="1">
    <location>
        <begin position="49"/>
        <end position="139"/>
    </location>
</feature>
<feature type="zinc finger region" evidence="1">
    <location>
        <begin position="3"/>
        <end position="34"/>
    </location>
</feature>
<comment type="function">
    <text evidence="1">Negatively regulates transcription of bacterial ribonucleotide reductase nrd genes and operons by binding to NrdR-boxes.</text>
</comment>
<comment type="cofactor">
    <cofactor evidence="1">
        <name>Zn(2+)</name>
        <dbReference type="ChEBI" id="CHEBI:29105"/>
    </cofactor>
    <text evidence="1">Binds 1 zinc ion.</text>
</comment>
<comment type="similarity">
    <text evidence="1">Belongs to the NrdR family.</text>
</comment>
<name>NRDR_SALPA</name>
<organism>
    <name type="scientific">Salmonella paratyphi A (strain ATCC 9150 / SARB42)</name>
    <dbReference type="NCBI Taxonomy" id="295319"/>
    <lineage>
        <taxon>Bacteria</taxon>
        <taxon>Pseudomonadati</taxon>
        <taxon>Pseudomonadota</taxon>
        <taxon>Gammaproteobacteria</taxon>
        <taxon>Enterobacterales</taxon>
        <taxon>Enterobacteriaceae</taxon>
        <taxon>Salmonella</taxon>
    </lineage>
</organism>
<proteinExistence type="inferred from homology"/>
<sequence length="149" mass="17198">MHCPFCFAVDTKVIDSRLVGEGSSVRRRRQCLVCNERFTTFEVAELVMPRVIKSNDVREPFNEDKLRSGMLRALEKRPVSADDVEMALNHIKSQLRATGEREVPSKMIGNLVMEQLKKLDKVAYIRFASVYRSFEDIKDFGEEIARLQD</sequence>
<accession>Q5PFS6</accession>